<accession>Q57682</accession>
<organism>
    <name type="scientific">Methanocaldococcus jannaschii (strain ATCC 43067 / DSM 2661 / JAL-1 / JCM 10045 / NBRC 100440)</name>
    <name type="common">Methanococcus jannaschii</name>
    <dbReference type="NCBI Taxonomy" id="243232"/>
    <lineage>
        <taxon>Archaea</taxon>
        <taxon>Methanobacteriati</taxon>
        <taxon>Methanobacteriota</taxon>
        <taxon>Methanomada group</taxon>
        <taxon>Methanococci</taxon>
        <taxon>Methanococcales</taxon>
        <taxon>Methanocaldococcaceae</taxon>
        <taxon>Methanocaldococcus</taxon>
    </lineage>
</organism>
<name>Y229_METJA</name>
<keyword id="KW-0238">DNA-binding</keyword>
<keyword id="KW-1185">Reference proteome</keyword>
<keyword id="KW-0804">Transcription</keyword>
<keyword id="KW-0805">Transcription regulation</keyword>
<protein>
    <recommendedName>
        <fullName>Uncharacterized HTH-type transcriptional regulator MJ0229</fullName>
    </recommendedName>
</protein>
<dbReference type="EMBL" id="L77117">
    <property type="protein sequence ID" value="AAB98214.1"/>
    <property type="molecule type" value="Genomic_DNA"/>
</dbReference>
<dbReference type="PIR" id="F64328">
    <property type="entry name" value="F64328"/>
</dbReference>
<dbReference type="RefSeq" id="WP_010869727.1">
    <property type="nucleotide sequence ID" value="NC_000909.1"/>
</dbReference>
<dbReference type="SMR" id="Q57682"/>
<dbReference type="STRING" id="243232.MJ_0229"/>
<dbReference type="PaxDb" id="243232-MJ_0229"/>
<dbReference type="EnsemblBacteria" id="AAB98214">
    <property type="protein sequence ID" value="AAB98214"/>
    <property type="gene ID" value="MJ_0229"/>
</dbReference>
<dbReference type="GeneID" id="1451082"/>
<dbReference type="KEGG" id="mja:MJ_0229"/>
<dbReference type="eggNOG" id="arCOG01679">
    <property type="taxonomic scope" value="Archaea"/>
</dbReference>
<dbReference type="HOGENOM" id="CLU_097806_9_1_2"/>
<dbReference type="InParanoid" id="Q57682"/>
<dbReference type="OrthoDB" id="9623at2157"/>
<dbReference type="PhylomeDB" id="Q57682"/>
<dbReference type="Proteomes" id="UP000000805">
    <property type="component" value="Chromosome"/>
</dbReference>
<dbReference type="GO" id="GO:0003677">
    <property type="term" value="F:DNA binding"/>
    <property type="evidence" value="ECO:0007669"/>
    <property type="project" value="UniProtKB-KW"/>
</dbReference>
<dbReference type="GO" id="GO:0003700">
    <property type="term" value="F:DNA-binding transcription factor activity"/>
    <property type="evidence" value="ECO:0007669"/>
    <property type="project" value="InterPro"/>
</dbReference>
<dbReference type="CDD" id="cd00090">
    <property type="entry name" value="HTH_ARSR"/>
    <property type="match status" value="1"/>
</dbReference>
<dbReference type="Gene3D" id="1.10.10.10">
    <property type="entry name" value="Winged helix-like DNA-binding domain superfamily/Winged helix DNA-binding domain"/>
    <property type="match status" value="1"/>
</dbReference>
<dbReference type="InterPro" id="IPR011991">
    <property type="entry name" value="ArsR-like_HTH"/>
</dbReference>
<dbReference type="InterPro" id="IPR001845">
    <property type="entry name" value="HTH_ArsR_DNA-bd_dom"/>
</dbReference>
<dbReference type="InterPro" id="IPR036388">
    <property type="entry name" value="WH-like_DNA-bd_sf"/>
</dbReference>
<dbReference type="InterPro" id="IPR036390">
    <property type="entry name" value="WH_DNA-bd_sf"/>
</dbReference>
<dbReference type="PANTHER" id="PTHR38600">
    <property type="entry name" value="TRANSCRIPTIONAL REGULATORY PROTEIN"/>
    <property type="match status" value="1"/>
</dbReference>
<dbReference type="PANTHER" id="PTHR38600:SF1">
    <property type="entry name" value="TRANSCRIPTIONAL REGULATORY PROTEIN"/>
    <property type="match status" value="1"/>
</dbReference>
<dbReference type="Pfam" id="PF01022">
    <property type="entry name" value="HTH_5"/>
    <property type="match status" value="1"/>
</dbReference>
<dbReference type="SMART" id="SM00418">
    <property type="entry name" value="HTH_ARSR"/>
    <property type="match status" value="1"/>
</dbReference>
<dbReference type="SUPFAM" id="SSF46785">
    <property type="entry name" value="Winged helix' DNA-binding domain"/>
    <property type="match status" value="1"/>
</dbReference>
<proteinExistence type="predicted"/>
<reference key="1">
    <citation type="journal article" date="1996" name="Science">
        <title>Complete genome sequence of the methanogenic archaeon, Methanococcus jannaschii.</title>
        <authorList>
            <person name="Bult C.J."/>
            <person name="White O."/>
            <person name="Olsen G.J."/>
            <person name="Zhou L."/>
            <person name="Fleischmann R.D."/>
            <person name="Sutton G.G."/>
            <person name="Blake J.A."/>
            <person name="FitzGerald L.M."/>
            <person name="Clayton R.A."/>
            <person name="Gocayne J.D."/>
            <person name="Kerlavage A.R."/>
            <person name="Dougherty B.A."/>
            <person name="Tomb J.-F."/>
            <person name="Adams M.D."/>
            <person name="Reich C.I."/>
            <person name="Overbeek R."/>
            <person name="Kirkness E.F."/>
            <person name="Weinstock K.G."/>
            <person name="Merrick J.M."/>
            <person name="Glodek A."/>
            <person name="Scott J.L."/>
            <person name="Geoghagen N.S.M."/>
            <person name="Weidman J.F."/>
            <person name="Fuhrmann J.L."/>
            <person name="Nguyen D."/>
            <person name="Utterback T.R."/>
            <person name="Kelley J.M."/>
            <person name="Peterson J.D."/>
            <person name="Sadow P.W."/>
            <person name="Hanna M.C."/>
            <person name="Cotton M.D."/>
            <person name="Roberts K.M."/>
            <person name="Hurst M.A."/>
            <person name="Kaine B.P."/>
            <person name="Borodovsky M."/>
            <person name="Klenk H.-P."/>
            <person name="Fraser C.M."/>
            <person name="Smith H.O."/>
            <person name="Woese C.R."/>
            <person name="Venter J.C."/>
        </authorList>
    </citation>
    <scope>NUCLEOTIDE SEQUENCE [LARGE SCALE GENOMIC DNA]</scope>
    <source>
        <strain>ATCC 43067 / DSM 2661 / JAL-1 / JCM 10045 / NBRC 100440</strain>
    </source>
</reference>
<sequence>MKLIDVVKMGEALSNPIRVKILYILNKQPKNIYELAKELELSRPVVYAHLRKLEDADLVESDLVLEGSRAKRIYKAKEFKFYIDNEIIKKLFENE</sequence>
<gene>
    <name type="ordered locus">MJ0229</name>
</gene>
<feature type="chain" id="PRO_0000160631" description="Uncharacterized HTH-type transcriptional regulator MJ0229">
    <location>
        <begin position="1"/>
        <end position="95"/>
    </location>
</feature>